<feature type="chain" id="PRO_0000123656" description="Ditrans,polycis-undecaprenyl-diphosphate synthase ((2E,6E)-farnesyl-diphosphate specific)">
    <location>
        <begin position="1"/>
        <end position="251"/>
    </location>
</feature>
<feature type="active site" evidence="1">
    <location>
        <position position="21"/>
    </location>
</feature>
<feature type="active site" description="Proton acceptor" evidence="1">
    <location>
        <position position="69"/>
    </location>
</feature>
<feature type="binding site" evidence="1">
    <location>
        <position position="21"/>
    </location>
    <ligand>
        <name>Mg(2+)</name>
        <dbReference type="ChEBI" id="CHEBI:18420"/>
    </ligand>
</feature>
<feature type="binding site" evidence="1">
    <location>
        <begin position="22"/>
        <end position="25"/>
    </location>
    <ligand>
        <name>substrate</name>
    </ligand>
</feature>
<feature type="binding site" evidence="1">
    <location>
        <position position="26"/>
    </location>
    <ligand>
        <name>substrate</name>
    </ligand>
</feature>
<feature type="binding site" evidence="1">
    <location>
        <position position="38"/>
    </location>
    <ligand>
        <name>substrate</name>
    </ligand>
</feature>
<feature type="binding site" evidence="1">
    <location>
        <begin position="66"/>
        <end position="68"/>
    </location>
    <ligand>
        <name>substrate</name>
    </ligand>
</feature>
<feature type="binding site" evidence="1">
    <location>
        <position position="70"/>
    </location>
    <ligand>
        <name>substrate</name>
    </ligand>
</feature>
<feature type="binding site" evidence="1">
    <location>
        <position position="72"/>
    </location>
    <ligand>
        <name>substrate</name>
    </ligand>
</feature>
<feature type="binding site" evidence="1">
    <location>
        <position position="189"/>
    </location>
    <ligand>
        <name>substrate</name>
    </ligand>
</feature>
<feature type="binding site" evidence="1">
    <location>
        <begin position="195"/>
        <end position="197"/>
    </location>
    <ligand>
        <name>substrate</name>
    </ligand>
</feature>
<feature type="binding site" evidence="1">
    <location>
        <position position="208"/>
    </location>
    <ligand>
        <name>Mg(2+)</name>
        <dbReference type="ChEBI" id="CHEBI:18420"/>
    </ligand>
</feature>
<reference key="1">
    <citation type="journal article" date="2003" name="Proc. Natl. Acad. Sci. U.S.A.">
        <title>The complete genome sequence of the Arabidopsis and tomato pathogen Pseudomonas syringae pv. tomato DC3000.</title>
        <authorList>
            <person name="Buell C.R."/>
            <person name="Joardar V."/>
            <person name="Lindeberg M."/>
            <person name="Selengut J."/>
            <person name="Paulsen I.T."/>
            <person name="Gwinn M.L."/>
            <person name="Dodson R.J."/>
            <person name="DeBoy R.T."/>
            <person name="Durkin A.S."/>
            <person name="Kolonay J.F."/>
            <person name="Madupu R."/>
            <person name="Daugherty S.C."/>
            <person name="Brinkac L.M."/>
            <person name="Beanan M.J."/>
            <person name="Haft D.H."/>
            <person name="Nelson W.C."/>
            <person name="Davidsen T.M."/>
            <person name="Zafar N."/>
            <person name="Zhou L."/>
            <person name="Liu J."/>
            <person name="Yuan Q."/>
            <person name="Khouri H.M."/>
            <person name="Fedorova N.B."/>
            <person name="Tran B."/>
            <person name="Russell D."/>
            <person name="Berry K.J."/>
            <person name="Utterback T.R."/>
            <person name="Van Aken S.E."/>
            <person name="Feldblyum T.V."/>
            <person name="D'Ascenzo M."/>
            <person name="Deng W.-L."/>
            <person name="Ramos A.R."/>
            <person name="Alfano J.R."/>
            <person name="Cartinhour S."/>
            <person name="Chatterjee A.K."/>
            <person name="Delaney T.P."/>
            <person name="Lazarowitz S.G."/>
            <person name="Martin G.B."/>
            <person name="Schneider D.J."/>
            <person name="Tang X."/>
            <person name="Bender C.L."/>
            <person name="White O."/>
            <person name="Fraser C.M."/>
            <person name="Collmer A."/>
        </authorList>
    </citation>
    <scope>NUCLEOTIDE SEQUENCE [LARGE SCALE GENOMIC DNA]</scope>
    <source>
        <strain>ATCC BAA-871 / DC3000</strain>
    </source>
</reference>
<name>UPPS_PSESM</name>
<gene>
    <name evidence="1" type="primary">uppS</name>
    <name type="ordered locus">PSPTO_1538</name>
</gene>
<dbReference type="EC" id="2.5.1.31" evidence="1"/>
<dbReference type="EMBL" id="AE016853">
    <property type="protein sequence ID" value="AAO55058.1"/>
    <property type="molecule type" value="Genomic_DNA"/>
</dbReference>
<dbReference type="RefSeq" id="NP_791363.1">
    <property type="nucleotide sequence ID" value="NC_004578.1"/>
</dbReference>
<dbReference type="RefSeq" id="WP_005765985.1">
    <property type="nucleotide sequence ID" value="NC_004578.1"/>
</dbReference>
<dbReference type="SMR" id="Q886N9"/>
<dbReference type="STRING" id="223283.PSPTO_1538"/>
<dbReference type="GeneID" id="1183175"/>
<dbReference type="KEGG" id="pst:PSPTO_1538"/>
<dbReference type="PATRIC" id="fig|223283.9.peg.1564"/>
<dbReference type="eggNOG" id="COG0020">
    <property type="taxonomic scope" value="Bacteria"/>
</dbReference>
<dbReference type="HOGENOM" id="CLU_038505_1_1_6"/>
<dbReference type="OrthoDB" id="4191603at2"/>
<dbReference type="PhylomeDB" id="Q886N9"/>
<dbReference type="Proteomes" id="UP000002515">
    <property type="component" value="Chromosome"/>
</dbReference>
<dbReference type="GO" id="GO:0005829">
    <property type="term" value="C:cytosol"/>
    <property type="evidence" value="ECO:0007669"/>
    <property type="project" value="TreeGrafter"/>
</dbReference>
<dbReference type="GO" id="GO:0008834">
    <property type="term" value="F:ditrans,polycis-undecaprenyl-diphosphate synthase [(2E,6E)-farnesyl-diphosphate specific] activity"/>
    <property type="evidence" value="ECO:0007669"/>
    <property type="project" value="UniProtKB-UniRule"/>
</dbReference>
<dbReference type="GO" id="GO:0000287">
    <property type="term" value="F:magnesium ion binding"/>
    <property type="evidence" value="ECO:0007669"/>
    <property type="project" value="UniProtKB-UniRule"/>
</dbReference>
<dbReference type="GO" id="GO:0071555">
    <property type="term" value="P:cell wall organization"/>
    <property type="evidence" value="ECO:0007669"/>
    <property type="project" value="UniProtKB-KW"/>
</dbReference>
<dbReference type="GO" id="GO:0009252">
    <property type="term" value="P:peptidoglycan biosynthetic process"/>
    <property type="evidence" value="ECO:0007669"/>
    <property type="project" value="UniProtKB-UniRule"/>
</dbReference>
<dbReference type="GO" id="GO:0016094">
    <property type="term" value="P:polyprenol biosynthetic process"/>
    <property type="evidence" value="ECO:0007669"/>
    <property type="project" value="TreeGrafter"/>
</dbReference>
<dbReference type="GO" id="GO:0008360">
    <property type="term" value="P:regulation of cell shape"/>
    <property type="evidence" value="ECO:0007669"/>
    <property type="project" value="UniProtKB-KW"/>
</dbReference>
<dbReference type="CDD" id="cd00475">
    <property type="entry name" value="Cis_IPPS"/>
    <property type="match status" value="1"/>
</dbReference>
<dbReference type="FunFam" id="3.40.1180.10:FF:000001">
    <property type="entry name" value="(2E,6E)-farnesyl-diphosphate-specific ditrans,polycis-undecaprenyl-diphosphate synthase"/>
    <property type="match status" value="1"/>
</dbReference>
<dbReference type="Gene3D" id="3.40.1180.10">
    <property type="entry name" value="Decaprenyl diphosphate synthase-like"/>
    <property type="match status" value="1"/>
</dbReference>
<dbReference type="HAMAP" id="MF_01139">
    <property type="entry name" value="ISPT"/>
    <property type="match status" value="1"/>
</dbReference>
<dbReference type="InterPro" id="IPR001441">
    <property type="entry name" value="UPP_synth-like"/>
</dbReference>
<dbReference type="InterPro" id="IPR018520">
    <property type="entry name" value="UPP_synth-like_CS"/>
</dbReference>
<dbReference type="InterPro" id="IPR036424">
    <property type="entry name" value="UPP_synth-like_sf"/>
</dbReference>
<dbReference type="NCBIfam" id="TIGR00055">
    <property type="entry name" value="uppS"/>
    <property type="match status" value="1"/>
</dbReference>
<dbReference type="PANTHER" id="PTHR10291:SF0">
    <property type="entry name" value="DEHYDRODOLICHYL DIPHOSPHATE SYNTHASE 2"/>
    <property type="match status" value="1"/>
</dbReference>
<dbReference type="PANTHER" id="PTHR10291">
    <property type="entry name" value="DEHYDRODOLICHYL DIPHOSPHATE SYNTHASE FAMILY MEMBER"/>
    <property type="match status" value="1"/>
</dbReference>
<dbReference type="Pfam" id="PF01255">
    <property type="entry name" value="Prenyltransf"/>
    <property type="match status" value="1"/>
</dbReference>
<dbReference type="SUPFAM" id="SSF64005">
    <property type="entry name" value="Undecaprenyl diphosphate synthase"/>
    <property type="match status" value="1"/>
</dbReference>
<dbReference type="PROSITE" id="PS01066">
    <property type="entry name" value="UPP_SYNTHASE"/>
    <property type="match status" value="1"/>
</dbReference>
<accession>Q886N9</accession>
<evidence type="ECO:0000255" key="1">
    <source>
        <dbReference type="HAMAP-Rule" id="MF_01139"/>
    </source>
</evidence>
<organism>
    <name type="scientific">Pseudomonas syringae pv. tomato (strain ATCC BAA-871 / DC3000)</name>
    <dbReference type="NCBI Taxonomy" id="223283"/>
    <lineage>
        <taxon>Bacteria</taxon>
        <taxon>Pseudomonadati</taxon>
        <taxon>Pseudomonadota</taxon>
        <taxon>Gammaproteobacteria</taxon>
        <taxon>Pseudomonadales</taxon>
        <taxon>Pseudomonadaceae</taxon>
        <taxon>Pseudomonas</taxon>
    </lineage>
</organism>
<keyword id="KW-0133">Cell shape</keyword>
<keyword id="KW-0961">Cell wall biogenesis/degradation</keyword>
<keyword id="KW-0460">Magnesium</keyword>
<keyword id="KW-0479">Metal-binding</keyword>
<keyword id="KW-0573">Peptidoglycan synthesis</keyword>
<keyword id="KW-1185">Reference proteome</keyword>
<keyword id="KW-0808">Transferase</keyword>
<proteinExistence type="inferred from homology"/>
<protein>
    <recommendedName>
        <fullName evidence="1">Ditrans,polycis-undecaprenyl-diphosphate synthase ((2E,6E)-farnesyl-diphosphate specific)</fullName>
        <ecNumber evidence="1">2.5.1.31</ecNumber>
    </recommendedName>
    <alternativeName>
        <fullName evidence="1">Ditrans,polycis-undecaprenylcistransferase</fullName>
    </alternativeName>
    <alternativeName>
        <fullName evidence="1">Undecaprenyl diphosphate synthase</fullName>
        <shortName evidence="1">UDS</shortName>
    </alternativeName>
    <alternativeName>
        <fullName evidence="1">Undecaprenyl pyrophosphate synthase</fullName>
        <shortName evidence="1">UPP synthase</shortName>
    </alternativeName>
</protein>
<comment type="function">
    <text evidence="1">Catalyzes the sequential condensation of isopentenyl diphosphate (IPP) with (2E,6E)-farnesyl diphosphate (E,E-FPP) to yield (2Z,6Z,10Z,14Z,18Z,22Z,26Z,30Z,34E,38E)-undecaprenyl diphosphate (di-trans,octa-cis-UPP). UPP is the precursor of glycosyl carrier lipid in the biosynthesis of bacterial cell wall polysaccharide components such as peptidoglycan and lipopolysaccharide.</text>
</comment>
<comment type="catalytic activity">
    <reaction evidence="1">
        <text>8 isopentenyl diphosphate + (2E,6E)-farnesyl diphosphate = di-trans,octa-cis-undecaprenyl diphosphate + 8 diphosphate</text>
        <dbReference type="Rhea" id="RHEA:27551"/>
        <dbReference type="ChEBI" id="CHEBI:33019"/>
        <dbReference type="ChEBI" id="CHEBI:58405"/>
        <dbReference type="ChEBI" id="CHEBI:128769"/>
        <dbReference type="ChEBI" id="CHEBI:175763"/>
        <dbReference type="EC" id="2.5.1.31"/>
    </reaction>
</comment>
<comment type="cofactor">
    <cofactor evidence="1">
        <name>Mg(2+)</name>
        <dbReference type="ChEBI" id="CHEBI:18420"/>
    </cofactor>
    <text evidence="1">Binds 2 magnesium ions per subunit.</text>
</comment>
<comment type="subunit">
    <text evidence="1">Homodimer.</text>
</comment>
<comment type="similarity">
    <text evidence="1">Belongs to the UPP synthase family.</text>
</comment>
<sequence>MEKIKSAGPSSVPRHVAIIMDGNNRWARKRLLPGVAGHKAGVDAVRAVIEVCAEAKVEVLTLFAFSSENWQRPAEEVGALMELFFTALRRETKRLNENDISLRIIGDRSRFHPELQAAMREAEVRTSGNSRFVLQIAANYGGQWDIAQAAQRLAREVQAGHLQPEDITPQLLQTCLATGDLPLPDLCIRTGGEHRISNFLLWQLAYAELYFSDLFWPDFKHDAMRAALADFASRQRRFGKTSEQVEAGARA</sequence>